<reference key="1">
    <citation type="submission" date="2006-12" db="EMBL/GenBank/DDBJ databases">
        <title>Complete sequence of Mycobacterium vanbaalenii PYR-1.</title>
        <authorList>
            <consortium name="US DOE Joint Genome Institute"/>
            <person name="Copeland A."/>
            <person name="Lucas S."/>
            <person name="Lapidus A."/>
            <person name="Barry K."/>
            <person name="Detter J.C."/>
            <person name="Glavina del Rio T."/>
            <person name="Hammon N."/>
            <person name="Israni S."/>
            <person name="Dalin E."/>
            <person name="Tice H."/>
            <person name="Pitluck S."/>
            <person name="Singan V."/>
            <person name="Schmutz J."/>
            <person name="Larimer F."/>
            <person name="Land M."/>
            <person name="Hauser L."/>
            <person name="Kyrpides N."/>
            <person name="Anderson I.J."/>
            <person name="Miller C."/>
            <person name="Richardson P."/>
        </authorList>
    </citation>
    <scope>NUCLEOTIDE SEQUENCE [LARGE SCALE GENOMIC DNA]</scope>
    <source>
        <strain>DSM 7251 / JCM 13017 / BCRC 16820 / KCTC 9966 / NRRL B-24157 / PYR-1</strain>
    </source>
</reference>
<name>MSHC_MYCVP</name>
<feature type="chain" id="PRO_0000400470" description="L-cysteine:1D-myo-inositol 2-amino-2-deoxy-alpha-D-glucopyranoside ligase">
    <location>
        <begin position="1"/>
        <end position="429"/>
    </location>
</feature>
<feature type="short sequence motif" description="'HIGH' region" evidence="1">
    <location>
        <begin position="62"/>
        <end position="72"/>
    </location>
</feature>
<feature type="short sequence motif" description="'ERGGDP' region" evidence="1">
    <location>
        <begin position="204"/>
        <end position="209"/>
    </location>
</feature>
<feature type="short sequence motif" description="'KMSKS' region" evidence="1">
    <location>
        <begin position="306"/>
        <end position="310"/>
    </location>
</feature>
<feature type="binding site" evidence="1">
    <location>
        <begin position="60"/>
        <end position="63"/>
    </location>
    <ligand>
        <name>L-cysteinyl-5'-AMP</name>
        <dbReference type="ChEBI" id="CHEBI:144924"/>
    </ligand>
</feature>
<feature type="binding site" evidence="1">
    <location>
        <position position="60"/>
    </location>
    <ligand>
        <name>Zn(2+)</name>
        <dbReference type="ChEBI" id="CHEBI:29105"/>
    </ligand>
</feature>
<feature type="binding site" evidence="1">
    <location>
        <position position="75"/>
    </location>
    <ligand>
        <name>L-cysteinyl-5'-AMP</name>
        <dbReference type="ChEBI" id="CHEBI:144924"/>
    </ligand>
</feature>
<feature type="binding site" evidence="1">
    <location>
        <begin position="98"/>
        <end position="100"/>
    </location>
    <ligand>
        <name>L-cysteinyl-5'-AMP</name>
        <dbReference type="ChEBI" id="CHEBI:144924"/>
    </ligand>
</feature>
<feature type="binding site" evidence="1">
    <location>
        <position position="244"/>
    </location>
    <ligand>
        <name>L-cysteinyl-5'-AMP</name>
        <dbReference type="ChEBI" id="CHEBI:144924"/>
    </ligand>
</feature>
<feature type="binding site" evidence="1">
    <location>
        <position position="248"/>
    </location>
    <ligand>
        <name>Zn(2+)</name>
        <dbReference type="ChEBI" id="CHEBI:29105"/>
    </ligand>
</feature>
<feature type="binding site" evidence="1">
    <location>
        <begin position="266"/>
        <end position="268"/>
    </location>
    <ligand>
        <name>L-cysteinyl-5'-AMP</name>
        <dbReference type="ChEBI" id="CHEBI:144924"/>
    </ligand>
</feature>
<feature type="binding site" evidence="1">
    <location>
        <position position="273"/>
    </location>
    <ligand>
        <name>Zn(2+)</name>
        <dbReference type="ChEBI" id="CHEBI:29105"/>
    </ligand>
</feature>
<feature type="binding site" evidence="1">
    <location>
        <position position="300"/>
    </location>
    <ligand>
        <name>L-cysteinyl-5'-AMP</name>
        <dbReference type="ChEBI" id="CHEBI:144924"/>
    </ligand>
</feature>
<accession>A1TAS3</accession>
<comment type="function">
    <text evidence="1">Catalyzes the ATP-dependent condensation of GlcN-Ins and L-cysteine to form L-Cys-GlcN-Ins.</text>
</comment>
<comment type="catalytic activity">
    <reaction evidence="1">
        <text>1D-myo-inositol 2-amino-2-deoxy-alpha-D-glucopyranoside + L-cysteine + ATP = 1D-myo-inositol 2-(L-cysteinylamino)-2-deoxy-alpha-D-glucopyranoside + AMP + diphosphate + H(+)</text>
        <dbReference type="Rhea" id="RHEA:26176"/>
        <dbReference type="ChEBI" id="CHEBI:15378"/>
        <dbReference type="ChEBI" id="CHEBI:30616"/>
        <dbReference type="ChEBI" id="CHEBI:33019"/>
        <dbReference type="ChEBI" id="CHEBI:35235"/>
        <dbReference type="ChEBI" id="CHEBI:58886"/>
        <dbReference type="ChEBI" id="CHEBI:58887"/>
        <dbReference type="ChEBI" id="CHEBI:456215"/>
        <dbReference type="EC" id="6.3.1.13"/>
    </reaction>
</comment>
<comment type="cofactor">
    <cofactor evidence="1">
        <name>Zn(2+)</name>
        <dbReference type="ChEBI" id="CHEBI:29105"/>
    </cofactor>
    <text evidence="1">Binds 1 zinc ion per subunit.</text>
</comment>
<comment type="subunit">
    <text evidence="1">Monomer.</text>
</comment>
<comment type="similarity">
    <text evidence="1">Belongs to the class-I aminoacyl-tRNA synthetase family. MshC subfamily.</text>
</comment>
<proteinExistence type="inferred from homology"/>
<evidence type="ECO:0000255" key="1">
    <source>
        <dbReference type="HAMAP-Rule" id="MF_01697"/>
    </source>
</evidence>
<gene>
    <name evidence="1" type="primary">mshC</name>
    <name type="ordered locus">Mvan_3478</name>
</gene>
<sequence length="429" mass="46870">MNQPSDLSHTSMSRVEAMHSWSAPNVPALPGRGPQLRLYDSADRQVRPVAPGATATMYVCGITPYDATHLGHAATYLTFDLVHRLWRDSGHDVHYVQNITDVDDPLFERAQRDGIGWRELGDRETELFREDMAALRVLPPRDYVAATEAIAEVVELVEKMLAAGAAYVVDDPQYPDVYFRADATVQFGYESGYDRDTMLALFAERGGDPDRPGKSDPLDALLWLAERPGEPSWPSPFGPGRPGWHVECAAIALSRIGTGLDIQGGGSDLIFPHHEFSAAHAECVTGERRFARHYVHAGMIGWDGHKMSKSRGNLVLVSQLRRDGVDPAAIRLGLFAGHYRDDRFWSPAVLDEALARLHRWRSATALAGAPDATDVVARVRRYLADDLDTPKALAALDGWATDALTYGGHDATAGTTVATAVDALLGIAL</sequence>
<keyword id="KW-0067">ATP-binding</keyword>
<keyword id="KW-0436">Ligase</keyword>
<keyword id="KW-0479">Metal-binding</keyword>
<keyword id="KW-0547">Nucleotide-binding</keyword>
<keyword id="KW-0862">Zinc</keyword>
<organism>
    <name type="scientific">Mycolicibacterium vanbaalenii (strain DSM 7251 / JCM 13017 / BCRC 16820 / KCTC 9966 / NRRL B-24157 / PYR-1)</name>
    <name type="common">Mycobacterium vanbaalenii</name>
    <dbReference type="NCBI Taxonomy" id="350058"/>
    <lineage>
        <taxon>Bacteria</taxon>
        <taxon>Bacillati</taxon>
        <taxon>Actinomycetota</taxon>
        <taxon>Actinomycetes</taxon>
        <taxon>Mycobacteriales</taxon>
        <taxon>Mycobacteriaceae</taxon>
        <taxon>Mycolicibacterium</taxon>
    </lineage>
</organism>
<protein>
    <recommendedName>
        <fullName evidence="1">L-cysteine:1D-myo-inositol 2-amino-2-deoxy-alpha-D-glucopyranoside ligase</fullName>
        <shortName evidence="1">L-Cys:GlcN-Ins ligase</shortName>
        <ecNumber evidence="1">6.3.1.13</ecNumber>
    </recommendedName>
    <alternativeName>
        <fullName evidence="1">Mycothiol ligase</fullName>
        <shortName evidence="1">MSH ligase</shortName>
    </alternativeName>
</protein>
<dbReference type="EC" id="6.3.1.13" evidence="1"/>
<dbReference type="EMBL" id="CP000511">
    <property type="protein sequence ID" value="ABM14273.1"/>
    <property type="molecule type" value="Genomic_DNA"/>
</dbReference>
<dbReference type="SMR" id="A1TAS3"/>
<dbReference type="STRING" id="350058.Mvan_3478"/>
<dbReference type="KEGG" id="mva:Mvan_3478"/>
<dbReference type="eggNOG" id="COG0215">
    <property type="taxonomic scope" value="Bacteria"/>
</dbReference>
<dbReference type="HOGENOM" id="CLU_013528_0_0_11"/>
<dbReference type="Proteomes" id="UP000009159">
    <property type="component" value="Chromosome"/>
</dbReference>
<dbReference type="GO" id="GO:0005829">
    <property type="term" value="C:cytosol"/>
    <property type="evidence" value="ECO:0007669"/>
    <property type="project" value="TreeGrafter"/>
</dbReference>
<dbReference type="GO" id="GO:0005524">
    <property type="term" value="F:ATP binding"/>
    <property type="evidence" value="ECO:0007669"/>
    <property type="project" value="UniProtKB-KW"/>
</dbReference>
<dbReference type="GO" id="GO:0035446">
    <property type="term" value="F:cysteine-glucosaminylinositol ligase activity"/>
    <property type="evidence" value="ECO:0007669"/>
    <property type="project" value="UniProtKB-UniRule"/>
</dbReference>
<dbReference type="GO" id="GO:0004817">
    <property type="term" value="F:cysteine-tRNA ligase activity"/>
    <property type="evidence" value="ECO:0007669"/>
    <property type="project" value="TreeGrafter"/>
</dbReference>
<dbReference type="GO" id="GO:0008270">
    <property type="term" value="F:zinc ion binding"/>
    <property type="evidence" value="ECO:0007669"/>
    <property type="project" value="UniProtKB-UniRule"/>
</dbReference>
<dbReference type="GO" id="GO:0006423">
    <property type="term" value="P:cysteinyl-tRNA aminoacylation"/>
    <property type="evidence" value="ECO:0007669"/>
    <property type="project" value="TreeGrafter"/>
</dbReference>
<dbReference type="GO" id="GO:0010125">
    <property type="term" value="P:mycothiol biosynthetic process"/>
    <property type="evidence" value="ECO:0007669"/>
    <property type="project" value="UniProtKB-UniRule"/>
</dbReference>
<dbReference type="CDD" id="cd00672">
    <property type="entry name" value="CysRS_core"/>
    <property type="match status" value="1"/>
</dbReference>
<dbReference type="FunFam" id="3.40.50.620:FF:000134">
    <property type="entry name" value="L-cysteine:1D-myo-inositol 2-amino-2-deoxy-alpha-D-glucopyranoside ligase"/>
    <property type="match status" value="1"/>
</dbReference>
<dbReference type="Gene3D" id="1.20.120.640">
    <property type="entry name" value="Anticodon-binding domain of a subclass of class I aminoacyl-tRNA synthetases"/>
    <property type="match status" value="1"/>
</dbReference>
<dbReference type="Gene3D" id="3.40.50.620">
    <property type="entry name" value="HUPs"/>
    <property type="match status" value="1"/>
</dbReference>
<dbReference type="HAMAP" id="MF_01697">
    <property type="entry name" value="MshC"/>
    <property type="match status" value="1"/>
</dbReference>
<dbReference type="InterPro" id="IPR024909">
    <property type="entry name" value="Cys-tRNA/MSH_ligase"/>
</dbReference>
<dbReference type="InterPro" id="IPR017812">
    <property type="entry name" value="Mycothiol_ligase_MshC"/>
</dbReference>
<dbReference type="InterPro" id="IPR014729">
    <property type="entry name" value="Rossmann-like_a/b/a_fold"/>
</dbReference>
<dbReference type="InterPro" id="IPR032678">
    <property type="entry name" value="tRNA-synt_1_cat_dom"/>
</dbReference>
<dbReference type="NCBIfam" id="TIGR03447">
    <property type="entry name" value="mycothiol_MshC"/>
    <property type="match status" value="1"/>
</dbReference>
<dbReference type="PANTHER" id="PTHR10890:SF3">
    <property type="entry name" value="CYSTEINE--TRNA LIGASE, CYTOPLASMIC"/>
    <property type="match status" value="1"/>
</dbReference>
<dbReference type="PANTHER" id="PTHR10890">
    <property type="entry name" value="CYSTEINYL-TRNA SYNTHETASE"/>
    <property type="match status" value="1"/>
</dbReference>
<dbReference type="Pfam" id="PF01406">
    <property type="entry name" value="tRNA-synt_1e"/>
    <property type="match status" value="1"/>
</dbReference>
<dbReference type="PRINTS" id="PR00983">
    <property type="entry name" value="TRNASYNTHCYS"/>
</dbReference>
<dbReference type="SUPFAM" id="SSF52374">
    <property type="entry name" value="Nucleotidylyl transferase"/>
    <property type="match status" value="1"/>
</dbReference>